<organism>
    <name type="scientific">Oryza sativa subsp. japonica</name>
    <name type="common">Rice</name>
    <dbReference type="NCBI Taxonomy" id="39947"/>
    <lineage>
        <taxon>Eukaryota</taxon>
        <taxon>Viridiplantae</taxon>
        <taxon>Streptophyta</taxon>
        <taxon>Embryophyta</taxon>
        <taxon>Tracheophyta</taxon>
        <taxon>Spermatophyta</taxon>
        <taxon>Magnoliopsida</taxon>
        <taxon>Liliopsida</taxon>
        <taxon>Poales</taxon>
        <taxon>Poaceae</taxon>
        <taxon>BOP clade</taxon>
        <taxon>Oryzoideae</taxon>
        <taxon>Oryzeae</taxon>
        <taxon>Oryzinae</taxon>
        <taxon>Oryza</taxon>
        <taxon>Oryza sativa</taxon>
    </lineage>
</organism>
<evidence type="ECO:0000250" key="1"/>
<evidence type="ECO:0000250" key="2">
    <source>
        <dbReference type="UniProtKB" id="P30184"/>
    </source>
</evidence>
<evidence type="ECO:0000250" key="3">
    <source>
        <dbReference type="UniProtKB" id="Q10712"/>
    </source>
</evidence>
<evidence type="ECO:0000255" key="4"/>
<evidence type="ECO:0000305" key="5"/>
<gene>
    <name type="ordered locus">Os12g0434400</name>
    <name type="ordered locus">LOC_Os12g24650</name>
</gene>
<comment type="function">
    <text evidence="1">Presumably involved in the processing and regular turnover of intracellular proteins. Catalyzes the removal of unsubstituted N-terminal amino acids from various peptides (By similarity).</text>
</comment>
<comment type="catalytic activity">
    <reaction>
        <text>Release of an N-terminal amino acid, Xaa-|-Yaa-, in which Xaa is preferably Leu, but may be other amino acids including Pro although not Arg or Lys, and Yaa may be Pro. Amino acid amides and methyl esters are also readily hydrolyzed, but rates on arylamides are exceedingly low.</text>
        <dbReference type="EC" id="3.4.11.1"/>
    </reaction>
</comment>
<comment type="catalytic activity">
    <reaction>
        <text>Release of N-terminal proline from a peptide.</text>
        <dbReference type="EC" id="3.4.11.5"/>
    </reaction>
</comment>
<comment type="cofactor">
    <cofactor evidence="2">
        <name>Mn(2+)</name>
        <dbReference type="ChEBI" id="CHEBI:29035"/>
    </cofactor>
    <text evidence="2">Binds 2 Mn(2+) ions per subunit.</text>
</comment>
<comment type="subunit">
    <text evidence="3">Homohexamer (dimer of homotrimers).</text>
</comment>
<comment type="subcellular location">
    <subcellularLocation>
        <location>Cytoplasm</location>
    </subcellularLocation>
</comment>
<comment type="similarity">
    <text evidence="5">Belongs to the peptidase M17 family.</text>
</comment>
<comment type="sequence caution" evidence="5">
    <conflict type="erroneous gene model prediction">
        <sequence resource="EMBL-CDS" id="BAT16960"/>
    </conflict>
</comment>
<proteinExistence type="inferred from homology"/>
<dbReference type="EC" id="3.4.11.1"/>
<dbReference type="EC" id="3.4.11.5"/>
<dbReference type="EMBL" id="DP000011">
    <property type="protein sequence ID" value="ABA97701.2"/>
    <property type="molecule type" value="Genomic_DNA"/>
</dbReference>
<dbReference type="EMBL" id="AP008218">
    <property type="protein sequence ID" value="BAF29703.1"/>
    <property type="molecule type" value="Genomic_DNA"/>
</dbReference>
<dbReference type="EMBL" id="AP014968">
    <property type="protein sequence ID" value="BAT16960.1"/>
    <property type="status" value="ALT_SEQ"/>
    <property type="molecule type" value="Genomic_DNA"/>
</dbReference>
<dbReference type="SMR" id="Q2QSB9"/>
<dbReference type="FunCoup" id="Q2QSB9">
    <property type="interactions" value="1250"/>
</dbReference>
<dbReference type="STRING" id="39947.Q2QSB9"/>
<dbReference type="MEROPS" id="M17.A03"/>
<dbReference type="PaxDb" id="39947-Q2QSB9"/>
<dbReference type="KEGG" id="dosa:Os12g0434400"/>
<dbReference type="KEGG" id="osa:4352123"/>
<dbReference type="eggNOG" id="KOG2597">
    <property type="taxonomic scope" value="Eukaryota"/>
</dbReference>
<dbReference type="HOGENOM" id="CLU_013734_5_1_1"/>
<dbReference type="InParanoid" id="Q2QSB9"/>
<dbReference type="OrthoDB" id="412814at2759"/>
<dbReference type="Proteomes" id="UP000000763">
    <property type="component" value="Chromosome 12"/>
</dbReference>
<dbReference type="Proteomes" id="UP000059680">
    <property type="component" value="Chromosome 12"/>
</dbReference>
<dbReference type="GO" id="GO:0005737">
    <property type="term" value="C:cytoplasm"/>
    <property type="evidence" value="ECO:0000318"/>
    <property type="project" value="GO_Central"/>
</dbReference>
<dbReference type="GO" id="GO:0030145">
    <property type="term" value="F:manganese ion binding"/>
    <property type="evidence" value="ECO:0000250"/>
    <property type="project" value="UniProtKB"/>
</dbReference>
<dbReference type="GO" id="GO:0070006">
    <property type="term" value="F:metalloaminopeptidase activity"/>
    <property type="evidence" value="ECO:0007669"/>
    <property type="project" value="InterPro"/>
</dbReference>
<dbReference type="GO" id="GO:0008233">
    <property type="term" value="F:peptidase activity"/>
    <property type="evidence" value="ECO:0000318"/>
    <property type="project" value="GO_Central"/>
</dbReference>
<dbReference type="GO" id="GO:0006508">
    <property type="term" value="P:proteolysis"/>
    <property type="evidence" value="ECO:0000318"/>
    <property type="project" value="GO_Central"/>
</dbReference>
<dbReference type="CDD" id="cd00433">
    <property type="entry name" value="Peptidase_M17"/>
    <property type="match status" value="1"/>
</dbReference>
<dbReference type="FunFam" id="3.40.630.10:FF:000033">
    <property type="entry name" value="M17 leucyl aminopeptidase"/>
    <property type="match status" value="1"/>
</dbReference>
<dbReference type="Gene3D" id="3.40.220.10">
    <property type="entry name" value="Leucine Aminopeptidase, subunit E, domain 1"/>
    <property type="match status" value="1"/>
</dbReference>
<dbReference type="Gene3D" id="3.40.630.10">
    <property type="entry name" value="Zn peptidases"/>
    <property type="match status" value="1"/>
</dbReference>
<dbReference type="HAMAP" id="MF_00181">
    <property type="entry name" value="Cytosol_peptidase_M17"/>
    <property type="match status" value="1"/>
</dbReference>
<dbReference type="InterPro" id="IPR011356">
    <property type="entry name" value="Leucine_aapep/pepB"/>
</dbReference>
<dbReference type="InterPro" id="IPR043472">
    <property type="entry name" value="Macro_dom-like"/>
</dbReference>
<dbReference type="InterPro" id="IPR000819">
    <property type="entry name" value="Peptidase_M17_C"/>
</dbReference>
<dbReference type="InterPro" id="IPR023042">
    <property type="entry name" value="Peptidase_M17_leu_NH2_pept"/>
</dbReference>
<dbReference type="InterPro" id="IPR008283">
    <property type="entry name" value="Peptidase_M17_N"/>
</dbReference>
<dbReference type="NCBIfam" id="NF002076">
    <property type="entry name" value="PRK00913.2-3"/>
    <property type="match status" value="1"/>
</dbReference>
<dbReference type="PANTHER" id="PTHR11963:SF35">
    <property type="entry name" value="LEUCINE AMINOPEPTIDASE 1-RELATED"/>
    <property type="match status" value="1"/>
</dbReference>
<dbReference type="PANTHER" id="PTHR11963">
    <property type="entry name" value="LEUCINE AMINOPEPTIDASE-RELATED"/>
    <property type="match status" value="1"/>
</dbReference>
<dbReference type="Pfam" id="PF00883">
    <property type="entry name" value="Peptidase_M17"/>
    <property type="match status" value="1"/>
</dbReference>
<dbReference type="Pfam" id="PF02789">
    <property type="entry name" value="Peptidase_M17_N"/>
    <property type="match status" value="1"/>
</dbReference>
<dbReference type="SUPFAM" id="SSF52949">
    <property type="entry name" value="Macro domain-like"/>
    <property type="match status" value="1"/>
</dbReference>
<dbReference type="SUPFAM" id="SSF53187">
    <property type="entry name" value="Zn-dependent exopeptidases"/>
    <property type="match status" value="1"/>
</dbReference>
<dbReference type="PROSITE" id="PS00631">
    <property type="entry name" value="CYTOSOL_AP"/>
    <property type="match status" value="1"/>
</dbReference>
<feature type="chain" id="PRO_0000247502" description="Putative leucine aminopeptidase 1">
    <location>
        <begin position="1"/>
        <end position="542"/>
    </location>
</feature>
<feature type="active site" evidence="4">
    <location>
        <position position="323"/>
    </location>
</feature>
<feature type="active site" evidence="4">
    <location>
        <position position="400"/>
    </location>
</feature>
<feature type="binding site" evidence="2">
    <location>
        <position position="294"/>
    </location>
    <ligand>
        <name>Mn(2+)</name>
        <dbReference type="ChEBI" id="CHEBI:29035"/>
        <label>1</label>
    </ligand>
</feature>
<feature type="binding site" evidence="2">
    <location>
        <position position="299"/>
    </location>
    <ligand>
        <name>Mn(2+)</name>
        <dbReference type="ChEBI" id="CHEBI:29035"/>
        <label>1</label>
    </ligand>
</feature>
<feature type="binding site" evidence="2">
    <location>
        <position position="299"/>
    </location>
    <ligand>
        <name>Mn(2+)</name>
        <dbReference type="ChEBI" id="CHEBI:29035"/>
        <label>2</label>
    </ligand>
</feature>
<feature type="binding site" evidence="2">
    <location>
        <position position="336"/>
    </location>
    <ligand>
        <name>Mn(2+)</name>
        <dbReference type="ChEBI" id="CHEBI:29035"/>
        <label>1</label>
    </ligand>
</feature>
<feature type="binding site" evidence="2">
    <location>
        <position position="396"/>
    </location>
    <ligand>
        <name>Mn(2+)</name>
        <dbReference type="ChEBI" id="CHEBI:29035"/>
        <label>2</label>
    </ligand>
</feature>
<feature type="binding site" evidence="2">
    <location>
        <position position="398"/>
    </location>
    <ligand>
        <name>Mn(2+)</name>
        <dbReference type="ChEBI" id="CHEBI:29035"/>
        <label>1</label>
    </ligand>
</feature>
<feature type="binding site" evidence="2">
    <location>
        <position position="398"/>
    </location>
    <ligand>
        <name>Mn(2+)</name>
        <dbReference type="ChEBI" id="CHEBI:29035"/>
        <label>2</label>
    </ligand>
</feature>
<sequence>MPNVVDPPQISFAAKDMDLTEWEGDILAVLVTETDVSKATSSSSRFTNAAAALAKLDGELGGLLSEASAEEEFAGRAGQSVALRLPTAPGLHGFKRVCLVGVGNNMPSSAAACRSTGETIAAVAKSAQARSAAVALASPPPGWVQGEDLRLNAAAAVASGVVLGLHEDRRYKSDSKKVHLKQVDLIGFGSGQEMGRKLQYANHVSSAVIFAKELVNSPANVLTPAVLAEEASNIASSYSDVLTATILDEEKCRELKMGSYLAVAAASANPPHFIHLCYKPPGGNVKRKLAIVGKGLTFDRFYLSLDNLLIVTKFVCIGGYNIKIGAVTTIELMKKDMGGSAALFGAAKALGQIKPPGVEVHFISAACENMISGTGMRPGDIVTASNGKTIEVDNTDAEGRLTLADALVYACKLGVDKIIDLATLTGYCRIALGPSIAGILTPSDELDKEVAAAYEASGEKFWRLPLEESYWEQMKSSVADMLNTGSPLGGAITAGLFLKQFVDEKVKWMHVDMAGPVWNYKKQEATGFGVSTLVEWVLINSS</sequence>
<protein>
    <recommendedName>
        <fullName>Putative leucine aminopeptidase 1</fullName>
        <ecNumber>3.4.11.1</ecNumber>
    </recommendedName>
    <alternativeName>
        <fullName>Leucyl aminopeptidase 1</fullName>
        <shortName>LAP 1</shortName>
    </alternativeName>
    <alternativeName>
        <fullName>Proline aminopeptidase 1</fullName>
        <ecNumber>3.4.11.5</ecNumber>
    </alternativeName>
    <alternativeName>
        <fullName>Prolyl aminopeptidase 1</fullName>
    </alternativeName>
</protein>
<reference key="1">
    <citation type="journal article" date="2005" name="BMC Biol.">
        <title>The sequence of rice chromosomes 11 and 12, rich in disease resistance genes and recent gene duplications.</title>
        <authorList>
            <consortium name="The rice chromosomes 11 and 12 sequencing consortia"/>
        </authorList>
    </citation>
    <scope>NUCLEOTIDE SEQUENCE [LARGE SCALE GENOMIC DNA]</scope>
    <source>
        <strain>cv. Nipponbare</strain>
    </source>
</reference>
<reference key="2">
    <citation type="journal article" date="2005" name="Nature">
        <title>The map-based sequence of the rice genome.</title>
        <authorList>
            <consortium name="International rice genome sequencing project (IRGSP)"/>
        </authorList>
    </citation>
    <scope>NUCLEOTIDE SEQUENCE [LARGE SCALE GENOMIC DNA]</scope>
    <source>
        <strain>cv. Nipponbare</strain>
    </source>
</reference>
<reference key="3">
    <citation type="journal article" date="2008" name="Nucleic Acids Res.">
        <title>The rice annotation project database (RAP-DB): 2008 update.</title>
        <authorList>
            <consortium name="The rice annotation project (RAP)"/>
        </authorList>
    </citation>
    <scope>GENOME REANNOTATION</scope>
    <source>
        <strain>cv. Nipponbare</strain>
    </source>
</reference>
<reference key="4">
    <citation type="journal article" date="2013" name="Rice">
        <title>Improvement of the Oryza sativa Nipponbare reference genome using next generation sequence and optical map data.</title>
        <authorList>
            <person name="Kawahara Y."/>
            <person name="de la Bastide M."/>
            <person name="Hamilton J.P."/>
            <person name="Kanamori H."/>
            <person name="McCombie W.R."/>
            <person name="Ouyang S."/>
            <person name="Schwartz D.C."/>
            <person name="Tanaka T."/>
            <person name="Wu J."/>
            <person name="Zhou S."/>
            <person name="Childs K.L."/>
            <person name="Davidson R.M."/>
            <person name="Lin H."/>
            <person name="Quesada-Ocampo L."/>
            <person name="Vaillancourt B."/>
            <person name="Sakai H."/>
            <person name="Lee S.S."/>
            <person name="Kim J."/>
            <person name="Numa H."/>
            <person name="Itoh T."/>
            <person name="Buell C.R."/>
            <person name="Matsumoto T."/>
        </authorList>
    </citation>
    <scope>GENOME REANNOTATION</scope>
    <source>
        <strain>cv. Nipponbare</strain>
    </source>
</reference>
<keyword id="KW-0031">Aminopeptidase</keyword>
<keyword id="KW-0963">Cytoplasm</keyword>
<keyword id="KW-0378">Hydrolase</keyword>
<keyword id="KW-0464">Manganese</keyword>
<keyword id="KW-0479">Metal-binding</keyword>
<keyword id="KW-0645">Protease</keyword>
<keyword id="KW-1185">Reference proteome</keyword>
<accession>Q2QSB9</accession>
<accession>A0A0P0Y9T0</accession>
<accession>Q0INL2</accession>
<name>AMPL1_ORYSJ</name>